<organism>
    <name type="scientific">Thermobifida fusca (strain YX)</name>
    <dbReference type="NCBI Taxonomy" id="269800"/>
    <lineage>
        <taxon>Bacteria</taxon>
        <taxon>Bacillati</taxon>
        <taxon>Actinomycetota</taxon>
        <taxon>Actinomycetes</taxon>
        <taxon>Streptosporangiales</taxon>
        <taxon>Nocardiopsidaceae</taxon>
        <taxon>Thermobifida</taxon>
    </lineage>
</organism>
<feature type="chain" id="PRO_1000197684" description="Nucleoid-associated protein Tfu_0045">
    <location>
        <begin position="1"/>
        <end position="116"/>
    </location>
</feature>
<evidence type="ECO:0000255" key="1">
    <source>
        <dbReference type="HAMAP-Rule" id="MF_00274"/>
    </source>
</evidence>
<keyword id="KW-0963">Cytoplasm</keyword>
<keyword id="KW-0238">DNA-binding</keyword>
<dbReference type="EMBL" id="CP000088">
    <property type="protein sequence ID" value="AAZ54083.1"/>
    <property type="molecule type" value="Genomic_DNA"/>
</dbReference>
<dbReference type="SMR" id="Q47TY1"/>
<dbReference type="STRING" id="269800.Tfu_0045"/>
<dbReference type="KEGG" id="tfu:Tfu_0045"/>
<dbReference type="eggNOG" id="COG0718">
    <property type="taxonomic scope" value="Bacteria"/>
</dbReference>
<dbReference type="HOGENOM" id="CLU_140930_4_0_11"/>
<dbReference type="GO" id="GO:0043590">
    <property type="term" value="C:bacterial nucleoid"/>
    <property type="evidence" value="ECO:0007669"/>
    <property type="project" value="UniProtKB-UniRule"/>
</dbReference>
<dbReference type="GO" id="GO:0005829">
    <property type="term" value="C:cytosol"/>
    <property type="evidence" value="ECO:0007669"/>
    <property type="project" value="TreeGrafter"/>
</dbReference>
<dbReference type="GO" id="GO:0003677">
    <property type="term" value="F:DNA binding"/>
    <property type="evidence" value="ECO:0007669"/>
    <property type="project" value="UniProtKB-UniRule"/>
</dbReference>
<dbReference type="Gene3D" id="3.30.1310.10">
    <property type="entry name" value="Nucleoid-associated protein YbaB-like domain"/>
    <property type="match status" value="1"/>
</dbReference>
<dbReference type="HAMAP" id="MF_00274">
    <property type="entry name" value="DNA_YbaB_EbfC"/>
    <property type="match status" value="1"/>
</dbReference>
<dbReference type="InterPro" id="IPR036894">
    <property type="entry name" value="YbaB-like_sf"/>
</dbReference>
<dbReference type="InterPro" id="IPR004401">
    <property type="entry name" value="YbaB/EbfC"/>
</dbReference>
<dbReference type="NCBIfam" id="TIGR00103">
    <property type="entry name" value="DNA_YbaB_EbfC"/>
    <property type="match status" value="1"/>
</dbReference>
<dbReference type="PANTHER" id="PTHR33449">
    <property type="entry name" value="NUCLEOID-ASSOCIATED PROTEIN YBAB"/>
    <property type="match status" value="1"/>
</dbReference>
<dbReference type="PANTHER" id="PTHR33449:SF1">
    <property type="entry name" value="NUCLEOID-ASSOCIATED PROTEIN YBAB"/>
    <property type="match status" value="1"/>
</dbReference>
<dbReference type="Pfam" id="PF02575">
    <property type="entry name" value="YbaB_DNA_bd"/>
    <property type="match status" value="1"/>
</dbReference>
<dbReference type="PIRSF" id="PIRSF004555">
    <property type="entry name" value="UCP004555"/>
    <property type="match status" value="1"/>
</dbReference>
<dbReference type="SUPFAM" id="SSF82607">
    <property type="entry name" value="YbaB-like"/>
    <property type="match status" value="1"/>
</dbReference>
<protein>
    <recommendedName>
        <fullName evidence="1">Nucleoid-associated protein Tfu_0045</fullName>
    </recommendedName>
</protein>
<name>Y045_THEFY</name>
<reference key="1">
    <citation type="journal article" date="2007" name="J. Bacteriol.">
        <title>Genome sequence and analysis of the soil cellulolytic actinomycete Thermobifida fusca YX.</title>
        <authorList>
            <person name="Lykidis A."/>
            <person name="Mavromatis K."/>
            <person name="Ivanova N."/>
            <person name="Anderson I."/>
            <person name="Land M."/>
            <person name="DiBartolo G."/>
            <person name="Martinez M."/>
            <person name="Lapidus A."/>
            <person name="Lucas S."/>
            <person name="Copeland A."/>
            <person name="Richardson P."/>
            <person name="Wilson D.B."/>
            <person name="Kyrpides N."/>
        </authorList>
    </citation>
    <scope>NUCLEOTIDE SEQUENCE [LARGE SCALE GENOMIC DNA]</scope>
    <source>
        <strain>YX</strain>
    </source>
</reference>
<comment type="function">
    <text evidence="1">Binds to DNA and alters its conformation. May be involved in regulation of gene expression, nucleoid organization and DNA protection.</text>
</comment>
<comment type="subunit">
    <text evidence="1">Homodimer.</text>
</comment>
<comment type="subcellular location">
    <subcellularLocation>
        <location evidence="1">Cytoplasm</location>
        <location evidence="1">Nucleoid</location>
    </subcellularLocation>
</comment>
<comment type="similarity">
    <text evidence="1">Belongs to the YbaB/EbfC family.</text>
</comment>
<proteinExistence type="inferred from homology"/>
<accession>Q47TY1</accession>
<gene>
    <name type="ordered locus">Tfu_0045</name>
</gene>
<sequence>MNPGGGLDMQAILQQAQQMQQQLMAAQQELDETKVTGSSGGGLVSVTMNGRGQVEDVSIDPKAVDPDDAAETAQTIADLVLAAIRDGERMVEEIQQQKMGPLAQGLGGGFPGLPGL</sequence>